<feature type="chain" id="PRO_0000107958" description="HTH-type transcriptional regulator GntR">
    <location>
        <begin position="1"/>
        <end position="331"/>
    </location>
</feature>
<feature type="domain" description="HTH lacI-type" evidence="1">
    <location>
        <begin position="6"/>
        <end position="60"/>
    </location>
</feature>
<feature type="DNA-binding region" description="H-T-H motif" evidence="1">
    <location>
        <begin position="8"/>
        <end position="27"/>
    </location>
</feature>
<evidence type="ECO:0000255" key="1">
    <source>
        <dbReference type="PROSITE-ProRule" id="PRU00111"/>
    </source>
</evidence>
<name>GNTR_ECOLI</name>
<organism>
    <name type="scientific">Escherichia coli (strain K12)</name>
    <dbReference type="NCBI Taxonomy" id="83333"/>
    <lineage>
        <taxon>Bacteria</taxon>
        <taxon>Pseudomonadati</taxon>
        <taxon>Pseudomonadota</taxon>
        <taxon>Gammaproteobacteria</taxon>
        <taxon>Enterobacterales</taxon>
        <taxon>Enterobacteriaceae</taxon>
        <taxon>Escherichia</taxon>
    </lineage>
</organism>
<reference key="1">
    <citation type="journal article" date="1997" name="J. Mol. Biol.">
        <title>Gene organization and transcriptional regulation of the gntRKU operon involved in gluconate uptake and catabolism of Escherichia coli.</title>
        <authorList>
            <person name="Izu H."/>
            <person name="Adachi O."/>
            <person name="Yamada M."/>
        </authorList>
    </citation>
    <scope>NUCLEOTIDE SEQUENCE [GENOMIC DNA]</scope>
    <source>
        <strain>K12 / W3110 / ATCC 27325 / DSM 5911</strain>
    </source>
</reference>
<reference key="2">
    <citation type="journal article" date="1997" name="Science">
        <title>The complete genome sequence of Escherichia coli K-12.</title>
        <authorList>
            <person name="Blattner F.R."/>
            <person name="Plunkett G. III"/>
            <person name="Bloch C.A."/>
            <person name="Perna N.T."/>
            <person name="Burland V."/>
            <person name="Riley M."/>
            <person name="Collado-Vides J."/>
            <person name="Glasner J.D."/>
            <person name="Rode C.K."/>
            <person name="Mayhew G.F."/>
            <person name="Gregor J."/>
            <person name="Davis N.W."/>
            <person name="Kirkpatrick H.A."/>
            <person name="Goeden M.A."/>
            <person name="Rose D.J."/>
            <person name="Mau B."/>
            <person name="Shao Y."/>
        </authorList>
    </citation>
    <scope>NUCLEOTIDE SEQUENCE [LARGE SCALE GENOMIC DNA]</scope>
    <source>
        <strain>K12 / MG1655 / ATCC 47076</strain>
    </source>
</reference>
<reference key="3">
    <citation type="journal article" date="2006" name="Nucleic Acids Res.">
        <title>Escherichia coli K-12: a cooperatively developed annotation snapshot -- 2005.</title>
        <authorList>
            <person name="Riley M."/>
            <person name="Abe T."/>
            <person name="Arnaud M.B."/>
            <person name="Berlyn M.K.B."/>
            <person name="Blattner F.R."/>
            <person name="Chaudhuri R.R."/>
            <person name="Glasner J.D."/>
            <person name="Horiuchi T."/>
            <person name="Keseler I.M."/>
            <person name="Kosuge T."/>
            <person name="Mori H."/>
            <person name="Perna N.T."/>
            <person name="Plunkett G. III"/>
            <person name="Rudd K.E."/>
            <person name="Serres M.H."/>
            <person name="Thomas G.H."/>
            <person name="Thomson N.R."/>
            <person name="Wishart D."/>
            <person name="Wanner B.L."/>
        </authorList>
    </citation>
    <scope>SEQUENCE REVISION</scope>
</reference>
<reference key="4">
    <citation type="journal article" date="2006" name="Mol. Syst. Biol.">
        <title>Highly accurate genome sequences of Escherichia coli K-12 strains MG1655 and W3110.</title>
        <authorList>
            <person name="Hayashi K."/>
            <person name="Morooka N."/>
            <person name="Yamamoto Y."/>
            <person name="Fujita K."/>
            <person name="Isono K."/>
            <person name="Choi S."/>
            <person name="Ohtsubo E."/>
            <person name="Baba T."/>
            <person name="Wanner B.L."/>
            <person name="Mori H."/>
            <person name="Horiuchi T."/>
        </authorList>
    </citation>
    <scope>NUCLEOTIDE SEQUENCE [LARGE SCALE GENOMIC DNA]</scope>
    <source>
        <strain>K12 / W3110 / ATCC 27325 / DSM 5911</strain>
    </source>
</reference>
<reference key="5">
    <citation type="journal article" date="1996" name="J. Bacteriol.">
        <title>Cloning and molecular genetic characterization of the Escherichia coli gntR, gntK, and gntU genes of GntI, the main system for gluconate metabolism.</title>
        <authorList>
            <person name="Tong S."/>
            <person name="Porco A."/>
            <person name="Isturiz T."/>
            <person name="Conway T."/>
        </authorList>
    </citation>
    <scope>CHARACTERIZATION</scope>
</reference>
<keyword id="KW-0238">DNA-binding</keyword>
<keyword id="KW-1185">Reference proteome</keyword>
<keyword id="KW-0678">Repressor</keyword>
<keyword id="KW-0804">Transcription</keyword>
<keyword id="KW-0805">Transcription regulation</keyword>
<protein>
    <recommendedName>
        <fullName>HTH-type transcriptional regulator GntR</fullName>
    </recommendedName>
    <alternativeName>
        <fullName>Gluconate utilization system GNT-I transcriptional repressor</fullName>
    </alternativeName>
</protein>
<comment type="function">
    <text>Negative regulator for the gluconate utilization system GNT-I, the gntUKR operon.</text>
</comment>
<comment type="pathway">
    <text>Carbohydrate acid metabolism; D-gluconate degradation [regulation].</text>
</comment>
<gene>
    <name type="primary">gntR</name>
    <name type="ordered locus">b3438</name>
    <name type="ordered locus">JW5946</name>
</gene>
<proteinExistence type="evidence at protein level"/>
<accession>P0ACP5</accession>
<accession>P46860</accession>
<accession>Q2M7A1</accession>
<accession>Q47241</accession>
<sequence>MKKKRPVLQDVADRVGVTKMTVSRFLRNPEQVSVALRGKIAAALDELGYIPNRAPDILSNATSRAIGVLLPSLTNQVFAEVLRGIESVTDAHGYQTMLAHYGYKPEMEQERLESMLSWNIDGLILTERTHTPRTLKMIEVAGIPVVELMDSKSPCLDIAVGFDNFEAARQMTTAIIARGHRHIAYLGARLDERTIIKQKGYEQAMLDAGLVPYSVMVEQSSSYSSGIELIRQARREYPQLDGVFCTNDDLAVGAAFECQRLGLKVPDDMAIAGFHGHDIGQVMEPRLASVLTPRERMGSIGAERLLARIRGESVTPKMLDLGFTLSPGGSI</sequence>
<dbReference type="EMBL" id="D84362">
    <property type="protein sequence ID" value="BAA12324.1"/>
    <property type="molecule type" value="Genomic_DNA"/>
</dbReference>
<dbReference type="EMBL" id="U18997">
    <property type="protein sequence ID" value="AAA58236.1"/>
    <property type="molecule type" value="Genomic_DNA"/>
</dbReference>
<dbReference type="EMBL" id="U00096">
    <property type="protein sequence ID" value="AAT48184.1"/>
    <property type="molecule type" value="Genomic_DNA"/>
</dbReference>
<dbReference type="EMBL" id="AP009048">
    <property type="protein sequence ID" value="BAE77855.1"/>
    <property type="molecule type" value="Genomic_DNA"/>
</dbReference>
<dbReference type="PIR" id="A65140">
    <property type="entry name" value="A65140"/>
</dbReference>
<dbReference type="RefSeq" id="WP_000730252.1">
    <property type="nucleotide sequence ID" value="NZ_SSZK01000008.1"/>
</dbReference>
<dbReference type="RefSeq" id="YP_026222.1">
    <property type="nucleotide sequence ID" value="NC_000913.3"/>
</dbReference>
<dbReference type="SMR" id="P0ACP5"/>
<dbReference type="BioGRID" id="4259299">
    <property type="interactions" value="70"/>
</dbReference>
<dbReference type="DIP" id="DIP-9822N"/>
<dbReference type="FunCoup" id="P0ACP5">
    <property type="interactions" value="25"/>
</dbReference>
<dbReference type="STRING" id="511145.b3438"/>
<dbReference type="jPOST" id="P0ACP5"/>
<dbReference type="PaxDb" id="511145-b3438"/>
<dbReference type="EnsemblBacteria" id="AAT48184">
    <property type="protein sequence ID" value="AAT48184"/>
    <property type="gene ID" value="b3438"/>
</dbReference>
<dbReference type="GeneID" id="75059978"/>
<dbReference type="GeneID" id="947946"/>
<dbReference type="KEGG" id="ecj:JW5946"/>
<dbReference type="KEGG" id="eco:b3438"/>
<dbReference type="KEGG" id="ecoc:C3026_18630"/>
<dbReference type="PATRIC" id="fig|1411691.4.peg.3291"/>
<dbReference type="EchoBASE" id="EB2514"/>
<dbReference type="eggNOG" id="COG1609">
    <property type="taxonomic scope" value="Bacteria"/>
</dbReference>
<dbReference type="HOGENOM" id="CLU_037628_6_3_6"/>
<dbReference type="InParanoid" id="P0ACP5"/>
<dbReference type="OMA" id="AIFECQR"/>
<dbReference type="OrthoDB" id="5681588at2"/>
<dbReference type="PhylomeDB" id="P0ACP5"/>
<dbReference type="BioCyc" id="EcoCyc:PD03585"/>
<dbReference type="UniPathway" id="UPA00792"/>
<dbReference type="PRO" id="PR:P0ACP5"/>
<dbReference type="Proteomes" id="UP000000625">
    <property type="component" value="Chromosome"/>
</dbReference>
<dbReference type="GO" id="GO:0005829">
    <property type="term" value="C:cytosol"/>
    <property type="evidence" value="ECO:0000314"/>
    <property type="project" value="EcoCyc"/>
</dbReference>
<dbReference type="GO" id="GO:0003700">
    <property type="term" value="F:DNA-binding transcription factor activity"/>
    <property type="evidence" value="ECO:0000318"/>
    <property type="project" value="GO_Central"/>
</dbReference>
<dbReference type="GO" id="GO:0000976">
    <property type="term" value="F:transcription cis-regulatory region binding"/>
    <property type="evidence" value="ECO:0000318"/>
    <property type="project" value="GO_Central"/>
</dbReference>
<dbReference type="GO" id="GO:0006974">
    <property type="term" value="P:DNA damage response"/>
    <property type="evidence" value="ECO:0000270"/>
    <property type="project" value="EcoliWiki"/>
</dbReference>
<dbReference type="GO" id="GO:0045892">
    <property type="term" value="P:negative regulation of DNA-templated transcription"/>
    <property type="evidence" value="ECO:0000314"/>
    <property type="project" value="EcoCyc"/>
</dbReference>
<dbReference type="GO" id="GO:0045893">
    <property type="term" value="P:positive regulation of DNA-templated transcription"/>
    <property type="evidence" value="ECO:0000314"/>
    <property type="project" value="EcoCyc"/>
</dbReference>
<dbReference type="GO" id="GO:0006355">
    <property type="term" value="P:regulation of DNA-templated transcription"/>
    <property type="evidence" value="ECO:0000318"/>
    <property type="project" value="GO_Central"/>
</dbReference>
<dbReference type="CDD" id="cd01392">
    <property type="entry name" value="HTH_LacI"/>
    <property type="match status" value="1"/>
</dbReference>
<dbReference type="CDD" id="cd01575">
    <property type="entry name" value="PBP1_GntR"/>
    <property type="match status" value="1"/>
</dbReference>
<dbReference type="FunFam" id="1.10.260.40:FF:000012">
    <property type="entry name" value="HTH-type transcriptional regulator GntR"/>
    <property type="match status" value="1"/>
</dbReference>
<dbReference type="FunFam" id="3.40.50.2300:FF:000064">
    <property type="entry name" value="HTH-type transcriptional regulator GntR"/>
    <property type="match status" value="1"/>
</dbReference>
<dbReference type="Gene3D" id="3.40.50.2300">
    <property type="match status" value="2"/>
</dbReference>
<dbReference type="Gene3D" id="1.10.260.40">
    <property type="entry name" value="lambda repressor-like DNA-binding domains"/>
    <property type="match status" value="1"/>
</dbReference>
<dbReference type="InterPro" id="IPR001387">
    <property type="entry name" value="Cro/C1-type_HTH"/>
</dbReference>
<dbReference type="InterPro" id="IPR000843">
    <property type="entry name" value="HTH_LacI"/>
</dbReference>
<dbReference type="InterPro" id="IPR010982">
    <property type="entry name" value="Lambda_DNA-bd_dom_sf"/>
</dbReference>
<dbReference type="InterPro" id="IPR001761">
    <property type="entry name" value="Peripla_BP/Lac1_sug-bd_dom"/>
</dbReference>
<dbReference type="InterPro" id="IPR028082">
    <property type="entry name" value="Peripla_BP_I"/>
</dbReference>
<dbReference type="NCBIfam" id="NF011563">
    <property type="entry name" value="PRK14987.1"/>
    <property type="match status" value="1"/>
</dbReference>
<dbReference type="PANTHER" id="PTHR30146:SF2">
    <property type="entry name" value="HTH-TYPE TRANSCRIPTIONAL REGULATOR GNTR"/>
    <property type="match status" value="1"/>
</dbReference>
<dbReference type="PANTHER" id="PTHR30146">
    <property type="entry name" value="LACI-RELATED TRANSCRIPTIONAL REPRESSOR"/>
    <property type="match status" value="1"/>
</dbReference>
<dbReference type="Pfam" id="PF00356">
    <property type="entry name" value="LacI"/>
    <property type="match status" value="1"/>
</dbReference>
<dbReference type="Pfam" id="PF00532">
    <property type="entry name" value="Peripla_BP_1"/>
    <property type="match status" value="1"/>
</dbReference>
<dbReference type="SMART" id="SM00354">
    <property type="entry name" value="HTH_LACI"/>
    <property type="match status" value="1"/>
</dbReference>
<dbReference type="SUPFAM" id="SSF47413">
    <property type="entry name" value="lambda repressor-like DNA-binding domains"/>
    <property type="match status" value="1"/>
</dbReference>
<dbReference type="SUPFAM" id="SSF53822">
    <property type="entry name" value="Periplasmic binding protein-like I"/>
    <property type="match status" value="1"/>
</dbReference>
<dbReference type="PROSITE" id="PS00356">
    <property type="entry name" value="HTH_LACI_1"/>
    <property type="match status" value="1"/>
</dbReference>
<dbReference type="PROSITE" id="PS50932">
    <property type="entry name" value="HTH_LACI_2"/>
    <property type="match status" value="1"/>
</dbReference>